<dbReference type="EC" id="5.4.2.7" evidence="1"/>
<dbReference type="EMBL" id="AP006716">
    <property type="protein sequence ID" value="BAE04208.1"/>
    <property type="molecule type" value="Genomic_DNA"/>
</dbReference>
<dbReference type="RefSeq" id="WP_011275210.1">
    <property type="nucleotide sequence ID" value="NC_007168.1"/>
</dbReference>
<dbReference type="SMR" id="Q4L817"/>
<dbReference type="GeneID" id="93780287"/>
<dbReference type="KEGG" id="sha:SH0899"/>
<dbReference type="eggNOG" id="COG1015">
    <property type="taxonomic scope" value="Bacteria"/>
</dbReference>
<dbReference type="HOGENOM" id="CLU_053861_0_0_9"/>
<dbReference type="OrthoDB" id="9769930at2"/>
<dbReference type="UniPathway" id="UPA00002">
    <property type="reaction ID" value="UER00467"/>
</dbReference>
<dbReference type="Proteomes" id="UP000000543">
    <property type="component" value="Chromosome"/>
</dbReference>
<dbReference type="GO" id="GO:0005829">
    <property type="term" value="C:cytosol"/>
    <property type="evidence" value="ECO:0007669"/>
    <property type="project" value="TreeGrafter"/>
</dbReference>
<dbReference type="GO" id="GO:0000287">
    <property type="term" value="F:magnesium ion binding"/>
    <property type="evidence" value="ECO:0007669"/>
    <property type="project" value="InterPro"/>
</dbReference>
<dbReference type="GO" id="GO:0030145">
    <property type="term" value="F:manganese ion binding"/>
    <property type="evidence" value="ECO:0007669"/>
    <property type="project" value="UniProtKB-UniRule"/>
</dbReference>
<dbReference type="GO" id="GO:0008973">
    <property type="term" value="F:phosphopentomutase activity"/>
    <property type="evidence" value="ECO:0007669"/>
    <property type="project" value="UniProtKB-UniRule"/>
</dbReference>
<dbReference type="GO" id="GO:0006018">
    <property type="term" value="P:2-deoxyribose 1-phosphate catabolic process"/>
    <property type="evidence" value="ECO:0007669"/>
    <property type="project" value="UniProtKB-UniRule"/>
</dbReference>
<dbReference type="GO" id="GO:0006015">
    <property type="term" value="P:5-phosphoribose 1-diphosphate biosynthetic process"/>
    <property type="evidence" value="ECO:0007669"/>
    <property type="project" value="UniProtKB-UniPathway"/>
</dbReference>
<dbReference type="GO" id="GO:0043094">
    <property type="term" value="P:metabolic compound salvage"/>
    <property type="evidence" value="ECO:0007669"/>
    <property type="project" value="InterPro"/>
</dbReference>
<dbReference type="GO" id="GO:0009117">
    <property type="term" value="P:nucleotide metabolic process"/>
    <property type="evidence" value="ECO:0007669"/>
    <property type="project" value="InterPro"/>
</dbReference>
<dbReference type="CDD" id="cd16009">
    <property type="entry name" value="PPM"/>
    <property type="match status" value="1"/>
</dbReference>
<dbReference type="FunFam" id="3.30.70.1250:FF:000001">
    <property type="entry name" value="Phosphopentomutase"/>
    <property type="match status" value="1"/>
</dbReference>
<dbReference type="Gene3D" id="3.40.720.10">
    <property type="entry name" value="Alkaline Phosphatase, subunit A"/>
    <property type="match status" value="1"/>
</dbReference>
<dbReference type="Gene3D" id="3.30.70.1250">
    <property type="entry name" value="Phosphopentomutase"/>
    <property type="match status" value="1"/>
</dbReference>
<dbReference type="HAMAP" id="MF_00740">
    <property type="entry name" value="Phosphopentomut"/>
    <property type="match status" value="1"/>
</dbReference>
<dbReference type="InterPro" id="IPR017850">
    <property type="entry name" value="Alkaline_phosphatase_core_sf"/>
</dbReference>
<dbReference type="InterPro" id="IPR010045">
    <property type="entry name" value="DeoB"/>
</dbReference>
<dbReference type="InterPro" id="IPR006124">
    <property type="entry name" value="Metalloenzyme"/>
</dbReference>
<dbReference type="InterPro" id="IPR024052">
    <property type="entry name" value="Phosphopentomutase_DeoB_cap_sf"/>
</dbReference>
<dbReference type="NCBIfam" id="TIGR01696">
    <property type="entry name" value="deoB"/>
    <property type="match status" value="1"/>
</dbReference>
<dbReference type="NCBIfam" id="NF003766">
    <property type="entry name" value="PRK05362.1"/>
    <property type="match status" value="1"/>
</dbReference>
<dbReference type="PANTHER" id="PTHR21110">
    <property type="entry name" value="PHOSPHOPENTOMUTASE"/>
    <property type="match status" value="1"/>
</dbReference>
<dbReference type="PANTHER" id="PTHR21110:SF0">
    <property type="entry name" value="PHOSPHOPENTOMUTASE"/>
    <property type="match status" value="1"/>
</dbReference>
<dbReference type="Pfam" id="PF01676">
    <property type="entry name" value="Metalloenzyme"/>
    <property type="match status" value="1"/>
</dbReference>
<dbReference type="PIRSF" id="PIRSF001491">
    <property type="entry name" value="Ppentomutase"/>
    <property type="match status" value="1"/>
</dbReference>
<dbReference type="SUPFAM" id="SSF53649">
    <property type="entry name" value="Alkaline phosphatase-like"/>
    <property type="match status" value="1"/>
</dbReference>
<dbReference type="SUPFAM" id="SSF143856">
    <property type="entry name" value="DeoB insert domain-like"/>
    <property type="match status" value="1"/>
</dbReference>
<organism>
    <name type="scientific">Staphylococcus haemolyticus (strain JCSC1435)</name>
    <dbReference type="NCBI Taxonomy" id="279808"/>
    <lineage>
        <taxon>Bacteria</taxon>
        <taxon>Bacillati</taxon>
        <taxon>Bacillota</taxon>
        <taxon>Bacilli</taxon>
        <taxon>Bacillales</taxon>
        <taxon>Staphylococcaceae</taxon>
        <taxon>Staphylococcus</taxon>
    </lineage>
</organism>
<name>DEOB_STAHJ</name>
<keyword id="KW-0963">Cytoplasm</keyword>
<keyword id="KW-0413">Isomerase</keyword>
<keyword id="KW-0464">Manganese</keyword>
<keyword id="KW-0479">Metal-binding</keyword>
<evidence type="ECO:0000255" key="1">
    <source>
        <dbReference type="HAMAP-Rule" id="MF_00740"/>
    </source>
</evidence>
<proteinExistence type="inferred from homology"/>
<protein>
    <recommendedName>
        <fullName evidence="1">Phosphopentomutase</fullName>
        <ecNumber evidence="1">5.4.2.7</ecNumber>
    </recommendedName>
    <alternativeName>
        <fullName evidence="1">Phosphodeoxyribomutase</fullName>
    </alternativeName>
</protein>
<gene>
    <name evidence="1" type="primary">deoB</name>
    <name type="synonym">drm</name>
    <name type="ordered locus">SH0899</name>
</gene>
<reference key="1">
    <citation type="journal article" date="2005" name="J. Bacteriol.">
        <title>Whole-genome sequencing of Staphylococcus haemolyticus uncovers the extreme plasticity of its genome and the evolution of human-colonizing staphylococcal species.</title>
        <authorList>
            <person name="Takeuchi F."/>
            <person name="Watanabe S."/>
            <person name="Baba T."/>
            <person name="Yuzawa H."/>
            <person name="Ito T."/>
            <person name="Morimoto Y."/>
            <person name="Kuroda M."/>
            <person name="Cui L."/>
            <person name="Takahashi M."/>
            <person name="Ankai A."/>
            <person name="Baba S."/>
            <person name="Fukui S."/>
            <person name="Lee J.C."/>
            <person name="Hiramatsu K."/>
        </authorList>
    </citation>
    <scope>NUCLEOTIDE SEQUENCE [LARGE SCALE GENOMIC DNA]</scope>
    <source>
        <strain>JCSC1435</strain>
    </source>
</reference>
<feature type="chain" id="PRO_0000199847" description="Phosphopentomutase">
    <location>
        <begin position="1"/>
        <end position="395"/>
    </location>
</feature>
<feature type="binding site" evidence="1">
    <location>
        <position position="14"/>
    </location>
    <ligand>
        <name>Mn(2+)</name>
        <dbReference type="ChEBI" id="CHEBI:29035"/>
        <label>1</label>
    </ligand>
</feature>
<feature type="binding site" evidence="1">
    <location>
        <position position="286"/>
    </location>
    <ligand>
        <name>Mn(2+)</name>
        <dbReference type="ChEBI" id="CHEBI:29035"/>
        <label>2</label>
    </ligand>
</feature>
<feature type="binding site" evidence="1">
    <location>
        <position position="291"/>
    </location>
    <ligand>
        <name>Mn(2+)</name>
        <dbReference type="ChEBI" id="CHEBI:29035"/>
        <label>2</label>
    </ligand>
</feature>
<feature type="binding site" evidence="1">
    <location>
        <position position="327"/>
    </location>
    <ligand>
        <name>Mn(2+)</name>
        <dbReference type="ChEBI" id="CHEBI:29035"/>
        <label>1</label>
    </ligand>
</feature>
<feature type="binding site" evidence="1">
    <location>
        <position position="328"/>
    </location>
    <ligand>
        <name>Mn(2+)</name>
        <dbReference type="ChEBI" id="CHEBI:29035"/>
        <label>1</label>
    </ligand>
</feature>
<feature type="binding site" evidence="1">
    <location>
        <position position="339"/>
    </location>
    <ligand>
        <name>Mn(2+)</name>
        <dbReference type="ChEBI" id="CHEBI:29035"/>
        <label>2</label>
    </ligand>
</feature>
<comment type="function">
    <text evidence="1">Isomerase that catalyzes the conversion of deoxy-ribose 1-phosphate (dRib-1-P) and ribose 1-phosphate (Rib-1-P) to deoxy-ribose 5-phosphate (dRib-5-P) and ribose 5-phosphate (Rib-5-P), respectively.</text>
</comment>
<comment type="catalytic activity">
    <reaction evidence="1">
        <text>2-deoxy-alpha-D-ribose 1-phosphate = 2-deoxy-D-ribose 5-phosphate</text>
        <dbReference type="Rhea" id="RHEA:27658"/>
        <dbReference type="ChEBI" id="CHEBI:57259"/>
        <dbReference type="ChEBI" id="CHEBI:62877"/>
        <dbReference type="EC" id="5.4.2.7"/>
    </reaction>
</comment>
<comment type="catalytic activity">
    <reaction evidence="1">
        <text>alpha-D-ribose 1-phosphate = D-ribose 5-phosphate</text>
        <dbReference type="Rhea" id="RHEA:18793"/>
        <dbReference type="ChEBI" id="CHEBI:57720"/>
        <dbReference type="ChEBI" id="CHEBI:78346"/>
        <dbReference type="EC" id="5.4.2.7"/>
    </reaction>
</comment>
<comment type="cofactor">
    <cofactor evidence="1">
        <name>Mn(2+)</name>
        <dbReference type="ChEBI" id="CHEBI:29035"/>
    </cofactor>
    <text evidence="1">Binds 2 manganese ions.</text>
</comment>
<comment type="pathway">
    <text evidence="1">Carbohydrate degradation; 2-deoxy-D-ribose 1-phosphate degradation; D-glyceraldehyde 3-phosphate and acetaldehyde from 2-deoxy-alpha-D-ribose 1-phosphate: step 1/2.</text>
</comment>
<comment type="subcellular location">
    <subcellularLocation>
        <location evidence="1">Cytoplasm</location>
    </subcellularLocation>
</comment>
<comment type="similarity">
    <text evidence="1">Belongs to the phosphopentomutase family.</text>
</comment>
<accession>Q4L817</accession>
<sequence>MTTPFKRVHLIVMDSVGIGEAPDAAAFNDEGSHTLKHTLEGFNQTLPNLEKLGLGNIEELPVVNKVEQPGAFYTKLSEASVGKDTMTGHWEIMGLNIMQPFKVYPNGFPDELIQEIEEMTGRKVVANKPASGTAIIDELGEHQMKTGDLIVYTSADPVLQIAAHEDIIPLEELYDICEKVRELTKDPKYLIGRVIARPYVGEPGNFTRTSNRHDYALKPFGKTVMNTLKDNNYDVIAIGKINDIYDGEGVTEAIRTKNNMDGMDQLINVVKKDFNGISFLNLVDFDALYGHRRDKEGYAQAIKDFDERLPELIDNLQEDDLVIITADHGNDPIADGTDHTREYIPVLMFSPKIDKYHELSGDSTFSSIGATIADNFNVELPEFGKSYLNEMGVEH</sequence>